<comment type="function">
    <text evidence="1">Catalyzes the reduction of crotonobetainyl-CoA to gamma-butyrobetainyl-CoA.</text>
</comment>
<comment type="catalytic activity">
    <reaction evidence="1">
        <text>4-(trimethylamino)butanoyl-CoA + oxidized [electron-transfer flavoprotein] + H(+) = crotonobetainyl-CoA + reduced [electron-transfer flavoprotein]</text>
        <dbReference type="Rhea" id="RHEA:51584"/>
        <dbReference type="Rhea" id="RHEA-COMP:10685"/>
        <dbReference type="Rhea" id="RHEA-COMP:10686"/>
        <dbReference type="ChEBI" id="CHEBI:15378"/>
        <dbReference type="ChEBI" id="CHEBI:57692"/>
        <dbReference type="ChEBI" id="CHEBI:58307"/>
        <dbReference type="ChEBI" id="CHEBI:60933"/>
        <dbReference type="ChEBI" id="CHEBI:61513"/>
        <dbReference type="EC" id="1.3.8.13"/>
    </reaction>
</comment>
<comment type="cofactor">
    <cofactor evidence="1">
        <name>FAD</name>
        <dbReference type="ChEBI" id="CHEBI:57692"/>
    </cofactor>
</comment>
<comment type="pathway">
    <text evidence="1">Amine and polyamine metabolism; carnitine metabolism.</text>
</comment>
<comment type="subunit">
    <text evidence="1">Homotetramer.</text>
</comment>
<comment type="subcellular location">
    <subcellularLocation>
        <location evidence="1">Cytoplasm</location>
    </subcellularLocation>
</comment>
<comment type="similarity">
    <text evidence="1">Belongs to the acyl-CoA dehydrogenase family.</text>
</comment>
<protein>
    <recommendedName>
        <fullName evidence="1">Crotonobetainyl-CoA reductase</fullName>
        <ecNumber evidence="1">1.3.8.13</ecNumber>
    </recommendedName>
    <alternativeName>
        <fullName evidence="1">Crotonobetainyl-CoA dehydrogenase</fullName>
    </alternativeName>
</protein>
<accession>A9MQH5</accession>
<feature type="chain" id="PRO_1000084429" description="Crotonobetainyl-CoA reductase">
    <location>
        <begin position="1"/>
        <end position="380"/>
    </location>
</feature>
<organism>
    <name type="scientific">Salmonella arizonae (strain ATCC BAA-731 / CDC346-86 / RSK2980)</name>
    <dbReference type="NCBI Taxonomy" id="41514"/>
    <lineage>
        <taxon>Bacteria</taxon>
        <taxon>Pseudomonadati</taxon>
        <taxon>Pseudomonadota</taxon>
        <taxon>Gammaproteobacteria</taxon>
        <taxon>Enterobacterales</taxon>
        <taxon>Enterobacteriaceae</taxon>
        <taxon>Salmonella</taxon>
    </lineage>
</organism>
<dbReference type="EC" id="1.3.8.13" evidence="1"/>
<dbReference type="EMBL" id="CP000880">
    <property type="protein sequence ID" value="ABX22773.1"/>
    <property type="molecule type" value="Genomic_DNA"/>
</dbReference>
<dbReference type="SMR" id="A9MQH5"/>
<dbReference type="STRING" id="41514.SARI_02927"/>
<dbReference type="KEGG" id="ses:SARI_02927"/>
<dbReference type="HOGENOM" id="CLU_018204_0_2_6"/>
<dbReference type="UniPathway" id="UPA00117"/>
<dbReference type="Proteomes" id="UP000002084">
    <property type="component" value="Chromosome"/>
</dbReference>
<dbReference type="GO" id="GO:0005737">
    <property type="term" value="C:cytoplasm"/>
    <property type="evidence" value="ECO:0007669"/>
    <property type="project" value="UniProtKB-SubCell"/>
</dbReference>
<dbReference type="GO" id="GO:0003995">
    <property type="term" value="F:acyl-CoA dehydrogenase activity"/>
    <property type="evidence" value="ECO:0007669"/>
    <property type="project" value="InterPro"/>
</dbReference>
<dbReference type="GO" id="GO:0050660">
    <property type="term" value="F:flavin adenine dinucleotide binding"/>
    <property type="evidence" value="ECO:0007669"/>
    <property type="project" value="InterPro"/>
</dbReference>
<dbReference type="GO" id="GO:0009437">
    <property type="term" value="P:carnitine metabolic process"/>
    <property type="evidence" value="ECO:0007669"/>
    <property type="project" value="UniProtKB-UniRule"/>
</dbReference>
<dbReference type="CDD" id="cd00567">
    <property type="entry name" value="ACAD"/>
    <property type="match status" value="1"/>
</dbReference>
<dbReference type="FunFam" id="1.20.140.10:FF:000001">
    <property type="entry name" value="Acyl-CoA dehydrogenase"/>
    <property type="match status" value="1"/>
</dbReference>
<dbReference type="FunFam" id="2.40.110.10:FF:000002">
    <property type="entry name" value="Acyl-CoA dehydrogenase fadE12"/>
    <property type="match status" value="1"/>
</dbReference>
<dbReference type="FunFam" id="1.10.540.10:FF:000005">
    <property type="entry name" value="Crotonobetainyl-CoA reductase"/>
    <property type="match status" value="1"/>
</dbReference>
<dbReference type="Gene3D" id="1.10.540.10">
    <property type="entry name" value="Acyl-CoA dehydrogenase/oxidase, N-terminal domain"/>
    <property type="match status" value="1"/>
</dbReference>
<dbReference type="Gene3D" id="2.40.110.10">
    <property type="entry name" value="Butyryl-CoA Dehydrogenase, subunit A, domain 2"/>
    <property type="match status" value="1"/>
</dbReference>
<dbReference type="Gene3D" id="1.20.140.10">
    <property type="entry name" value="Butyryl-CoA Dehydrogenase, subunit A, domain 3"/>
    <property type="match status" value="1"/>
</dbReference>
<dbReference type="HAMAP" id="MF_01052">
    <property type="entry name" value="CaiA"/>
    <property type="match status" value="1"/>
</dbReference>
<dbReference type="InterPro" id="IPR006089">
    <property type="entry name" value="Acyl-CoA_DH_CS"/>
</dbReference>
<dbReference type="InterPro" id="IPR006091">
    <property type="entry name" value="Acyl-CoA_Oxase/DH_mid-dom"/>
</dbReference>
<dbReference type="InterPro" id="IPR046373">
    <property type="entry name" value="Acyl-CoA_Oxase/DH_mid-dom_sf"/>
</dbReference>
<dbReference type="InterPro" id="IPR036250">
    <property type="entry name" value="AcylCo_DH-like_C"/>
</dbReference>
<dbReference type="InterPro" id="IPR009075">
    <property type="entry name" value="AcylCo_DH/oxidase_C"/>
</dbReference>
<dbReference type="InterPro" id="IPR013786">
    <property type="entry name" value="AcylCoA_DH/ox_N"/>
</dbReference>
<dbReference type="InterPro" id="IPR037069">
    <property type="entry name" value="AcylCoA_DH/ox_N_sf"/>
</dbReference>
<dbReference type="InterPro" id="IPR009100">
    <property type="entry name" value="AcylCoA_DH/oxidase_NM_dom_sf"/>
</dbReference>
<dbReference type="InterPro" id="IPR023450">
    <property type="entry name" value="CaiA"/>
</dbReference>
<dbReference type="NCBIfam" id="NF002885">
    <property type="entry name" value="PRK03354.1"/>
    <property type="match status" value="1"/>
</dbReference>
<dbReference type="PANTHER" id="PTHR43884">
    <property type="entry name" value="ACYL-COA DEHYDROGENASE"/>
    <property type="match status" value="1"/>
</dbReference>
<dbReference type="PANTHER" id="PTHR43884:SF12">
    <property type="entry name" value="ISOVALERYL-COA DEHYDROGENASE, MITOCHONDRIAL-RELATED"/>
    <property type="match status" value="1"/>
</dbReference>
<dbReference type="Pfam" id="PF00441">
    <property type="entry name" value="Acyl-CoA_dh_1"/>
    <property type="match status" value="1"/>
</dbReference>
<dbReference type="Pfam" id="PF02770">
    <property type="entry name" value="Acyl-CoA_dh_M"/>
    <property type="match status" value="1"/>
</dbReference>
<dbReference type="Pfam" id="PF02771">
    <property type="entry name" value="Acyl-CoA_dh_N"/>
    <property type="match status" value="1"/>
</dbReference>
<dbReference type="PIRSF" id="PIRSF016578">
    <property type="entry name" value="HsaA"/>
    <property type="match status" value="1"/>
</dbReference>
<dbReference type="SUPFAM" id="SSF47203">
    <property type="entry name" value="Acyl-CoA dehydrogenase C-terminal domain-like"/>
    <property type="match status" value="1"/>
</dbReference>
<dbReference type="SUPFAM" id="SSF56645">
    <property type="entry name" value="Acyl-CoA dehydrogenase NM domain-like"/>
    <property type="match status" value="1"/>
</dbReference>
<dbReference type="PROSITE" id="PS00072">
    <property type="entry name" value="ACYL_COA_DH_1"/>
    <property type="match status" value="1"/>
</dbReference>
<dbReference type="PROSITE" id="PS00073">
    <property type="entry name" value="ACYL_COA_DH_2"/>
    <property type="match status" value="1"/>
</dbReference>
<sequence>MDFNLNDEQELFVAGIRELMASENWEAYFAECDRDSIYPERFVKALAEMGIDSLLIPEEHGGLDAGFVTVAAVWMELGRLGAPTYVLYQLPGGFNTFLREGTQEQIDKIMAFRGTGKQMWNSAITEPGAGSDVGSLKTTYTRKNGKVYLNGSKCFITSSAYTPYIVVMARDGASPDKPVYTEWFVDMSKPGIKVTKLEKLGLRMDSCCEITFDEVELDEKDRFGREGNGFNRVKEEFDHERFLVALTNYGTAMCAFEDAARYANQRVQFGETIGRFQLIQEKFAHMAIKLNAMKNMLLEAAWKADNGTITSGDAAMCKYFCANAAFEVVDSAMQVLGGVGIAGNHRISRFWRDLRVDRVSGGSDEMQILTLGRAVLKQYR</sequence>
<gene>
    <name evidence="1" type="primary">caiA</name>
    <name type="ordered locus">SARI_02927</name>
</gene>
<reference key="1">
    <citation type="submission" date="2007-11" db="EMBL/GenBank/DDBJ databases">
        <authorList>
            <consortium name="The Salmonella enterica serovar Arizonae Genome Sequencing Project"/>
            <person name="McClelland M."/>
            <person name="Sanderson E.K."/>
            <person name="Porwollik S."/>
            <person name="Spieth J."/>
            <person name="Clifton W.S."/>
            <person name="Fulton R."/>
            <person name="Chunyan W."/>
            <person name="Wollam A."/>
            <person name="Shah N."/>
            <person name="Pepin K."/>
            <person name="Bhonagiri V."/>
            <person name="Nash W."/>
            <person name="Johnson M."/>
            <person name="Thiruvilangam P."/>
            <person name="Wilson R."/>
        </authorList>
    </citation>
    <scope>NUCLEOTIDE SEQUENCE [LARGE SCALE GENOMIC DNA]</scope>
    <source>
        <strain>ATCC BAA-731 / CDC346-86 / RSK2980</strain>
    </source>
</reference>
<proteinExistence type="inferred from homology"/>
<evidence type="ECO:0000255" key="1">
    <source>
        <dbReference type="HAMAP-Rule" id="MF_01052"/>
    </source>
</evidence>
<keyword id="KW-0963">Cytoplasm</keyword>
<keyword id="KW-0274">FAD</keyword>
<keyword id="KW-0285">Flavoprotein</keyword>
<keyword id="KW-0560">Oxidoreductase</keyword>
<keyword id="KW-1185">Reference proteome</keyword>
<name>CAIA_SALAR</name>